<keyword id="KW-0002">3D-structure</keyword>
<keyword id="KW-0903">Direct protein sequencing</keyword>
<keyword id="KW-0472">Membrane</keyword>
<keyword id="KW-0496">Mitochondrion</keyword>
<keyword id="KW-1000">Mitochondrion outer membrane</keyword>
<keyword id="KW-0547">Nucleotide-binding</keyword>
<keyword id="KW-0597">Phosphoprotein</keyword>
<keyword id="KW-1185">Reference proteome</keyword>
<keyword id="KW-0812">Transmembrane</keyword>
<keyword id="KW-1133">Transmembrane helix</keyword>
<dbReference type="EMBL" id="AK038466">
    <property type="protein sequence ID" value="BAC30010.1"/>
    <property type="molecule type" value="mRNA"/>
</dbReference>
<dbReference type="EMBL" id="AK044773">
    <property type="protein sequence ID" value="BAC32082.1"/>
    <property type="molecule type" value="mRNA"/>
</dbReference>
<dbReference type="EMBL" id="AK050546">
    <property type="protein sequence ID" value="BAC34317.1"/>
    <property type="molecule type" value="mRNA"/>
</dbReference>
<dbReference type="EMBL" id="AK080375">
    <property type="protein sequence ID" value="BAC37896.1"/>
    <property type="molecule type" value="mRNA"/>
</dbReference>
<dbReference type="CCDS" id="CCDS27661.1"/>
<dbReference type="RefSeq" id="NP_001344588.1">
    <property type="nucleotide sequence ID" value="NM_001357659.2"/>
</dbReference>
<dbReference type="RefSeq" id="NP_001403020.1">
    <property type="nucleotide sequence ID" value="NM_001416091.1"/>
</dbReference>
<dbReference type="RefSeq" id="NP_001403021.1">
    <property type="nucleotide sequence ID" value="NM_001416092.1"/>
</dbReference>
<dbReference type="RefSeq" id="NP_001403022.1">
    <property type="nucleotide sequence ID" value="NM_001416093.1"/>
</dbReference>
<dbReference type="RefSeq" id="NP_001403023.1">
    <property type="nucleotide sequence ID" value="NM_001416094.1"/>
</dbReference>
<dbReference type="RefSeq" id="NP_848834.2">
    <property type="nucleotide sequence ID" value="NM_178719.5"/>
</dbReference>
<dbReference type="RefSeq" id="XP_006521009.1">
    <property type="nucleotide sequence ID" value="XM_006520946.3"/>
</dbReference>
<dbReference type="RefSeq" id="XP_006521010.1">
    <property type="nucleotide sequence ID" value="XM_006520947.3"/>
</dbReference>
<dbReference type="PDB" id="4OAF">
    <property type="method" value="X-ray"/>
    <property type="resolution" value="2.20 A"/>
    <property type="chains" value="A/B/C/D=134-463"/>
</dbReference>
<dbReference type="PDB" id="4OAG">
    <property type="method" value="X-ray"/>
    <property type="resolution" value="2.00 A"/>
    <property type="chains" value="A/B=134-463"/>
</dbReference>
<dbReference type="PDB" id="4OAH">
    <property type="method" value="X-ray"/>
    <property type="resolution" value="2.00 A"/>
    <property type="chains" value="A/B/C/D=134-463"/>
</dbReference>
<dbReference type="PDB" id="4OAI">
    <property type="method" value="X-ray"/>
    <property type="resolution" value="2.00 A"/>
    <property type="chains" value="Z=134-463"/>
</dbReference>
<dbReference type="PDBsum" id="4OAF"/>
<dbReference type="PDBsum" id="4OAG"/>
<dbReference type="PDBsum" id="4OAH"/>
<dbReference type="PDBsum" id="4OAI"/>
<dbReference type="SMR" id="Q8BGV8"/>
<dbReference type="BioGRID" id="232098">
    <property type="interactions" value="2"/>
</dbReference>
<dbReference type="CORUM" id="Q8BGV8"/>
<dbReference type="DIP" id="DIP-60660N"/>
<dbReference type="FunCoup" id="Q8BGV8">
    <property type="interactions" value="3220"/>
</dbReference>
<dbReference type="IntAct" id="Q8BGV8">
    <property type="interactions" value="1"/>
</dbReference>
<dbReference type="STRING" id="10090.ENSMUSP00000023048"/>
<dbReference type="iPTMnet" id="Q8BGV8"/>
<dbReference type="PhosphoSitePlus" id="Q8BGV8"/>
<dbReference type="jPOST" id="Q8BGV8"/>
<dbReference type="PaxDb" id="10090-ENSMUSP00000023048"/>
<dbReference type="ProteomicsDB" id="292325"/>
<dbReference type="Antibodypedia" id="26626">
    <property type="antibodies" value="153 antibodies from 26 providers"/>
</dbReference>
<dbReference type="DNASU" id="239555"/>
<dbReference type="Ensembl" id="ENSMUST00000023048.12">
    <property type="protein sequence ID" value="ENSMUSP00000023048.5"/>
    <property type="gene ID" value="ENSMUSG00000022412.15"/>
</dbReference>
<dbReference type="Ensembl" id="ENSMUST00000166030.2">
    <property type="protein sequence ID" value="ENSMUSP00000129209.2"/>
    <property type="gene ID" value="ENSMUSG00000022412.15"/>
</dbReference>
<dbReference type="Ensembl" id="ENSMUST00000229138.2">
    <property type="protein sequence ID" value="ENSMUSP00000154875.2"/>
    <property type="gene ID" value="ENSMUSG00000022412.15"/>
</dbReference>
<dbReference type="GeneID" id="239555"/>
<dbReference type="KEGG" id="mmu:239555"/>
<dbReference type="UCSC" id="uc007wvh.2">
    <property type="organism name" value="mouse"/>
</dbReference>
<dbReference type="AGR" id="MGI:2146020"/>
<dbReference type="CTD" id="54471"/>
<dbReference type="MGI" id="MGI:2146020">
    <property type="gene designation" value="Mief1"/>
</dbReference>
<dbReference type="VEuPathDB" id="HostDB:ENSMUSG00000022412"/>
<dbReference type="eggNOG" id="KOG4542">
    <property type="taxonomic scope" value="Eukaryota"/>
</dbReference>
<dbReference type="GeneTree" id="ENSGT00390000013127"/>
<dbReference type="HOGENOM" id="CLU_046803_0_0_1"/>
<dbReference type="InParanoid" id="Q8BGV8"/>
<dbReference type="OMA" id="CEKEGDW"/>
<dbReference type="OrthoDB" id="5964386at2759"/>
<dbReference type="PhylomeDB" id="Q8BGV8"/>
<dbReference type="TreeFam" id="TF331032"/>
<dbReference type="BioGRID-ORCS" id="239555">
    <property type="hits" value="3 hits in 77 CRISPR screens"/>
</dbReference>
<dbReference type="ChiTaRS" id="Mief1">
    <property type="organism name" value="mouse"/>
</dbReference>
<dbReference type="EvolutionaryTrace" id="Q8BGV8"/>
<dbReference type="PRO" id="PR:Q8BGV8"/>
<dbReference type="Proteomes" id="UP000000589">
    <property type="component" value="Chromosome 15"/>
</dbReference>
<dbReference type="RNAct" id="Q8BGV8">
    <property type="molecule type" value="protein"/>
</dbReference>
<dbReference type="Bgee" id="ENSMUSG00000022412">
    <property type="expression patterns" value="Expressed in animal zygote and 233 other cell types or tissues"/>
</dbReference>
<dbReference type="ExpressionAtlas" id="Q8BGV8">
    <property type="expression patterns" value="baseline and differential"/>
</dbReference>
<dbReference type="GO" id="GO:0005741">
    <property type="term" value="C:mitochondrial outer membrane"/>
    <property type="evidence" value="ECO:0000250"/>
    <property type="project" value="UniProtKB"/>
</dbReference>
<dbReference type="GO" id="GO:0005739">
    <property type="term" value="C:mitochondrion"/>
    <property type="evidence" value="ECO:0007005"/>
    <property type="project" value="MGI"/>
</dbReference>
<dbReference type="GO" id="GO:0043531">
    <property type="term" value="F:ADP binding"/>
    <property type="evidence" value="ECO:0000266"/>
    <property type="project" value="MGI"/>
</dbReference>
<dbReference type="GO" id="GO:0019003">
    <property type="term" value="F:GDP binding"/>
    <property type="evidence" value="ECO:0000266"/>
    <property type="project" value="MGI"/>
</dbReference>
<dbReference type="GO" id="GO:0042802">
    <property type="term" value="F:identical protein binding"/>
    <property type="evidence" value="ECO:0000353"/>
    <property type="project" value="IntAct"/>
</dbReference>
<dbReference type="GO" id="GO:0000266">
    <property type="term" value="P:mitochondrial fission"/>
    <property type="evidence" value="ECO:0000250"/>
    <property type="project" value="UniProtKB"/>
</dbReference>
<dbReference type="GO" id="GO:0090141">
    <property type="term" value="P:positive regulation of mitochondrial fission"/>
    <property type="evidence" value="ECO:0000315"/>
    <property type="project" value="UniProtKB"/>
</dbReference>
<dbReference type="GO" id="GO:0010636">
    <property type="term" value="P:positive regulation of mitochondrial fusion"/>
    <property type="evidence" value="ECO:0000250"/>
    <property type="project" value="UniProtKB"/>
</dbReference>
<dbReference type="GO" id="GO:0090314">
    <property type="term" value="P:positive regulation of protein targeting to membrane"/>
    <property type="evidence" value="ECO:0000250"/>
    <property type="project" value="UniProtKB"/>
</dbReference>
<dbReference type="FunFam" id="1.10.1410.40:FF:000003">
    <property type="entry name" value="Mitochondrial dynamics protein MID51"/>
    <property type="match status" value="1"/>
</dbReference>
<dbReference type="FunFam" id="3.30.460.90:FF:000002">
    <property type="entry name" value="Mitochondrial dynamics protein MID51"/>
    <property type="match status" value="1"/>
</dbReference>
<dbReference type="Gene3D" id="1.10.1410.40">
    <property type="match status" value="1"/>
</dbReference>
<dbReference type="Gene3D" id="3.30.460.90">
    <property type="match status" value="1"/>
</dbReference>
<dbReference type="InterPro" id="IPR046906">
    <property type="entry name" value="Mab-21_HhH/H2TH-like"/>
</dbReference>
<dbReference type="InterPro" id="IPR024810">
    <property type="entry name" value="MAB21L/cGLR"/>
</dbReference>
<dbReference type="InterPro" id="IPR045909">
    <property type="entry name" value="MID49/MID51"/>
</dbReference>
<dbReference type="InterPro" id="IPR049097">
    <property type="entry name" value="MID51-like_C"/>
</dbReference>
<dbReference type="PANTHER" id="PTHR16451:SF12">
    <property type="entry name" value="MITOCHONDRIAL DYNAMICS PROTEIN MIEF1"/>
    <property type="match status" value="1"/>
</dbReference>
<dbReference type="PANTHER" id="PTHR16451">
    <property type="entry name" value="MITOCHONDRIAL DYNAMICS PROTEINS 49/51 FAMILY MEMBER"/>
    <property type="match status" value="1"/>
</dbReference>
<dbReference type="Pfam" id="PF20266">
    <property type="entry name" value="Mab-21_C"/>
    <property type="match status" value="1"/>
</dbReference>
<dbReference type="Pfam" id="PF21297">
    <property type="entry name" value="MID51-like_C"/>
    <property type="match status" value="1"/>
</dbReference>
<dbReference type="SMART" id="SM01265">
    <property type="entry name" value="Mab-21"/>
    <property type="match status" value="1"/>
</dbReference>
<feature type="chain" id="PRO_0000310449" description="Mitochondrial dynamics protein MID51">
    <location>
        <begin position="1"/>
        <end position="463"/>
    </location>
</feature>
<feature type="topological domain" description="Mitochondrial intermembrane" evidence="3">
    <location>
        <begin position="1"/>
        <end position="23"/>
    </location>
</feature>
<feature type="transmembrane region" description="Helical" evidence="3">
    <location>
        <begin position="24"/>
        <end position="46"/>
    </location>
</feature>
<feature type="topological domain" description="Cytoplasmic" evidence="3">
    <location>
        <begin position="47"/>
        <end position="463"/>
    </location>
</feature>
<feature type="region of interest" description="Dimerization" evidence="1">
    <location>
        <begin position="49"/>
        <end position="195"/>
    </location>
</feature>
<feature type="region of interest" description="Disordered" evidence="4">
    <location>
        <begin position="57"/>
        <end position="77"/>
    </location>
</feature>
<feature type="region of interest" description="Important for interaction with DNM1L" evidence="1">
    <location>
        <begin position="160"/>
        <end position="169"/>
    </location>
</feature>
<feature type="region of interest" description="Important for interaction with DNM1L" evidence="6">
    <location>
        <begin position="234"/>
        <end position="243"/>
    </location>
</feature>
<feature type="binding site" evidence="6">
    <location>
        <position position="187"/>
    </location>
    <ligand>
        <name>ADP</name>
        <dbReference type="ChEBI" id="CHEBI:456216"/>
    </ligand>
</feature>
<feature type="binding site" evidence="6">
    <location>
        <position position="189"/>
    </location>
    <ligand>
        <name>ADP</name>
        <dbReference type="ChEBI" id="CHEBI:456216"/>
    </ligand>
</feature>
<feature type="binding site" evidence="6">
    <location>
        <position position="201"/>
    </location>
    <ligand>
        <name>ADP</name>
        <dbReference type="ChEBI" id="CHEBI:456216"/>
    </ligand>
</feature>
<feature type="binding site" evidence="6">
    <location>
        <position position="340"/>
    </location>
    <ligand>
        <name>ADP</name>
        <dbReference type="ChEBI" id="CHEBI:456216"/>
    </ligand>
</feature>
<feature type="binding site" evidence="6">
    <location>
        <position position="342"/>
    </location>
    <ligand>
        <name>ADP</name>
        <dbReference type="ChEBI" id="CHEBI:456216"/>
    </ligand>
</feature>
<feature type="binding site" evidence="6">
    <location>
        <position position="368"/>
    </location>
    <ligand>
        <name>ADP</name>
        <dbReference type="ChEBI" id="CHEBI:456216"/>
    </ligand>
</feature>
<feature type="modified residue" description="Phosphoserine" evidence="2">
    <location>
        <position position="55"/>
    </location>
</feature>
<feature type="modified residue" description="Phosphoserine" evidence="2">
    <location>
        <position position="59"/>
    </location>
</feature>
<feature type="modified residue" description="Phosphoserine" evidence="8">
    <location>
        <position position="79"/>
    </location>
</feature>
<feature type="modified residue" description="Phosphoserine" evidence="2">
    <location>
        <position position="94"/>
    </location>
</feature>
<feature type="mutagenesis site" description="Abolishes ADP binding." evidence="6">
    <original>S</original>
    <variation>A</variation>
    <location>
        <position position="189"/>
    </location>
</feature>
<feature type="mutagenesis site" description="Abolishes ADP binding." evidence="6">
    <original>H</original>
    <variation>A</variation>
    <location>
        <position position="201"/>
    </location>
</feature>
<feature type="mutagenesis site" description="Abolishes interaction with DNM1L.">
    <original>RREN</original>
    <variation>AAEA</variation>
    <location>
        <begin position="234"/>
        <end position="237"/>
    </location>
</feature>
<feature type="mutagenesis site" description="Impairs interaction with DNM1L.">
    <original>EYFPR</original>
    <variation>AAFPA</variation>
    <location>
        <begin position="239"/>
        <end position="243"/>
    </location>
</feature>
<feature type="mutagenesis site" description="Impairs interaction with DNM1L.">
    <original>VGG</original>
    <variation>EEE</variation>
    <location>
        <begin position="253"/>
        <end position="255"/>
    </location>
</feature>
<feature type="mutagenesis site" description="Mildly reduces affinity for ADP." evidence="6">
    <original>K</original>
    <variation>A</variation>
    <location>
        <position position="368"/>
    </location>
</feature>
<feature type="sequence conflict" description="In Ref. 1; BAC37896." evidence="7" ref="1">
    <original>D</original>
    <variation>N</variation>
    <location>
        <position position="444"/>
    </location>
</feature>
<feature type="helix" evidence="10">
    <location>
        <begin position="135"/>
        <end position="145"/>
    </location>
</feature>
<feature type="helix" evidence="10">
    <location>
        <begin position="151"/>
        <end position="173"/>
    </location>
</feature>
<feature type="strand" evidence="9">
    <location>
        <begin position="179"/>
        <end position="181"/>
    </location>
</feature>
<feature type="strand" evidence="10">
    <location>
        <begin position="185"/>
        <end position="188"/>
    </location>
</feature>
<feature type="turn" evidence="10">
    <location>
        <begin position="189"/>
        <end position="193"/>
    </location>
</feature>
<feature type="strand" evidence="10">
    <location>
        <begin position="201"/>
        <end position="208"/>
    </location>
</feature>
<feature type="strand" evidence="10">
    <location>
        <begin position="214"/>
        <end position="219"/>
    </location>
</feature>
<feature type="helix" evidence="10">
    <location>
        <begin position="220"/>
        <end position="222"/>
    </location>
</feature>
<feature type="strand" evidence="10">
    <location>
        <begin position="230"/>
        <end position="235"/>
    </location>
</feature>
<feature type="turn" evidence="10">
    <location>
        <begin position="238"/>
        <end position="240"/>
    </location>
</feature>
<feature type="helix" evidence="10">
    <location>
        <begin position="247"/>
        <end position="251"/>
    </location>
</feature>
<feature type="helix" evidence="10">
    <location>
        <begin position="259"/>
        <end position="269"/>
    </location>
</feature>
<feature type="helix" evidence="10">
    <location>
        <begin position="271"/>
        <end position="273"/>
    </location>
</feature>
<feature type="helix" evidence="10">
    <location>
        <begin position="276"/>
        <end position="282"/>
    </location>
</feature>
<feature type="strand" evidence="10">
    <location>
        <begin position="286"/>
        <end position="289"/>
    </location>
</feature>
<feature type="strand" evidence="11">
    <location>
        <begin position="292"/>
        <end position="294"/>
    </location>
</feature>
<feature type="strand" evidence="10">
    <location>
        <begin position="297"/>
        <end position="303"/>
    </location>
</feature>
<feature type="strand" evidence="10">
    <location>
        <begin position="306"/>
        <end position="318"/>
    </location>
</feature>
<feature type="strand" evidence="10">
    <location>
        <begin position="321"/>
        <end position="324"/>
    </location>
</feature>
<feature type="helix" evidence="10">
    <location>
        <begin position="331"/>
        <end position="333"/>
    </location>
</feature>
<feature type="strand" evidence="10">
    <location>
        <begin position="337"/>
        <end position="339"/>
    </location>
</feature>
<feature type="helix" evidence="10">
    <location>
        <begin position="342"/>
        <end position="356"/>
    </location>
</feature>
<feature type="helix" evidence="10">
    <location>
        <begin position="360"/>
        <end position="373"/>
    </location>
</feature>
<feature type="helix" evidence="10">
    <location>
        <begin position="375"/>
        <end position="377"/>
    </location>
</feature>
<feature type="helix" evidence="10">
    <location>
        <begin position="382"/>
        <end position="395"/>
    </location>
</feature>
<feature type="helix" evidence="10">
    <location>
        <begin position="401"/>
        <end position="403"/>
    </location>
</feature>
<feature type="helix" evidence="10">
    <location>
        <begin position="404"/>
        <end position="421"/>
    </location>
</feature>
<feature type="strand" evidence="9">
    <location>
        <begin position="427"/>
        <end position="429"/>
    </location>
</feature>
<feature type="turn" evidence="10">
    <location>
        <begin position="434"/>
        <end position="437"/>
    </location>
</feature>
<feature type="helix" evidence="10">
    <location>
        <begin position="440"/>
        <end position="453"/>
    </location>
</feature>
<feature type="helix" evidence="10">
    <location>
        <begin position="457"/>
        <end position="460"/>
    </location>
</feature>
<comment type="function">
    <text evidence="5 6">Mitochondrial outer membrane protein which regulates mitochondrial fission/fusion dynamics. Promotes the recruitment and association of the fission mediator dynamin-related protein 1 (DNM1L) to the mitochondrial surface independently of the mitochondrial fission FIS1 and MFF proteins. Regulates DNM1L GTPase activity and DNM1L oligomerization. Binds ADP and can also bind GDP, although with lower affinity. Does not bind CDP, UDP, ATP, AMP or GTP. Inhibits DNM1L GTPase activity in the absence of bound ADP. Requires ADP to stimulate DNM1L GTPase activity and the assembly of DNM1L into long, oligomeric tubules with a spiral pattern, as opposed to the ring-like DNM1L oligomers observed in the absence of bound ADP. Does not require ADP for its function in recruiting DNM1L.</text>
</comment>
<comment type="subunit">
    <text evidence="6">Homodimer. Interacts with DNM1L.</text>
</comment>
<comment type="interaction">
    <interactant intactId="EBI-16092561">
        <id>Q8BGV8</id>
    </interactant>
    <interactant intactId="EBI-2365792">
        <id>Q8K1M6</id>
        <label>Dnm1l</label>
    </interactant>
    <organismsDiffer>false</organismsDiffer>
    <experiments>2</experiments>
</comment>
<comment type="interaction">
    <interactant intactId="EBI-16092561">
        <id>Q8BGV8</id>
    </interactant>
    <interactant intactId="EBI-16092613">
        <id>Q8K1M6-3</id>
        <label>Dnm1l</label>
    </interactant>
    <organismsDiffer>false</organismsDiffer>
    <experiments>5</experiments>
</comment>
<comment type="interaction">
    <interactant intactId="EBI-16092561">
        <id>Q8BGV8</id>
    </interactant>
    <interactant intactId="EBI-16092561">
        <id>Q8BGV8</id>
        <label>Mief1</label>
    </interactant>
    <organismsDiffer>false</organismsDiffer>
    <experiments>2</experiments>
</comment>
<comment type="subcellular location">
    <subcellularLocation>
        <location evidence="6">Mitochondrion outer membrane</location>
        <topology evidence="6">Single-pass membrane protein</topology>
    </subcellularLocation>
</comment>
<comment type="similarity">
    <text evidence="7">Belongs to the MID49/MID51 family.</text>
</comment>
<organism>
    <name type="scientific">Mus musculus</name>
    <name type="common">Mouse</name>
    <dbReference type="NCBI Taxonomy" id="10090"/>
    <lineage>
        <taxon>Eukaryota</taxon>
        <taxon>Metazoa</taxon>
        <taxon>Chordata</taxon>
        <taxon>Craniata</taxon>
        <taxon>Vertebrata</taxon>
        <taxon>Euteleostomi</taxon>
        <taxon>Mammalia</taxon>
        <taxon>Eutheria</taxon>
        <taxon>Euarchontoglires</taxon>
        <taxon>Glires</taxon>
        <taxon>Rodentia</taxon>
        <taxon>Myomorpha</taxon>
        <taxon>Muroidea</taxon>
        <taxon>Muridae</taxon>
        <taxon>Murinae</taxon>
        <taxon>Mus</taxon>
        <taxon>Mus</taxon>
    </lineage>
</organism>
<evidence type="ECO:0000250" key="1"/>
<evidence type="ECO:0000250" key="2">
    <source>
        <dbReference type="UniProtKB" id="Q9NQG6"/>
    </source>
</evidence>
<evidence type="ECO:0000255" key="3"/>
<evidence type="ECO:0000256" key="4">
    <source>
        <dbReference type="SAM" id="MobiDB-lite"/>
    </source>
</evidence>
<evidence type="ECO:0000269" key="5">
    <source>
    </source>
</evidence>
<evidence type="ECO:0000269" key="6">
    <source>
    </source>
</evidence>
<evidence type="ECO:0000305" key="7"/>
<evidence type="ECO:0007744" key="8">
    <source>
    </source>
</evidence>
<evidence type="ECO:0007829" key="9">
    <source>
        <dbReference type="PDB" id="4OAF"/>
    </source>
</evidence>
<evidence type="ECO:0007829" key="10">
    <source>
        <dbReference type="PDB" id="4OAG"/>
    </source>
</evidence>
<evidence type="ECO:0007829" key="11">
    <source>
        <dbReference type="PDB" id="4OAH"/>
    </source>
</evidence>
<proteinExistence type="evidence at protein level"/>
<protein>
    <recommendedName>
        <fullName>Mitochondrial dynamics protein MID51</fullName>
    </recommendedName>
    <alternativeName>
        <fullName>Mitochondrial dynamics protein of 51 kDa homolog</fullName>
    </alternativeName>
    <alternativeName>
        <fullName>Mitochondrial elongation factor 1</fullName>
    </alternativeName>
    <alternativeName>
        <fullName>Smith-Magenis syndrome chromosomal region candidate gene 7 protein-like</fullName>
    </alternativeName>
</protein>
<accession>Q8BGV8</accession>
<accession>Q8C4Y9</accession>
<reference key="1">
    <citation type="journal article" date="2005" name="Science">
        <title>The transcriptional landscape of the mammalian genome.</title>
        <authorList>
            <person name="Carninci P."/>
            <person name="Kasukawa T."/>
            <person name="Katayama S."/>
            <person name="Gough J."/>
            <person name="Frith M.C."/>
            <person name="Maeda N."/>
            <person name="Oyama R."/>
            <person name="Ravasi T."/>
            <person name="Lenhard B."/>
            <person name="Wells C."/>
            <person name="Kodzius R."/>
            <person name="Shimokawa K."/>
            <person name="Bajic V.B."/>
            <person name="Brenner S.E."/>
            <person name="Batalov S."/>
            <person name="Forrest A.R."/>
            <person name="Zavolan M."/>
            <person name="Davis M.J."/>
            <person name="Wilming L.G."/>
            <person name="Aidinis V."/>
            <person name="Allen J.E."/>
            <person name="Ambesi-Impiombato A."/>
            <person name="Apweiler R."/>
            <person name="Aturaliya R.N."/>
            <person name="Bailey T.L."/>
            <person name="Bansal M."/>
            <person name="Baxter L."/>
            <person name="Beisel K.W."/>
            <person name="Bersano T."/>
            <person name="Bono H."/>
            <person name="Chalk A.M."/>
            <person name="Chiu K.P."/>
            <person name="Choudhary V."/>
            <person name="Christoffels A."/>
            <person name="Clutterbuck D.R."/>
            <person name="Crowe M.L."/>
            <person name="Dalla E."/>
            <person name="Dalrymple B.P."/>
            <person name="de Bono B."/>
            <person name="Della Gatta G."/>
            <person name="di Bernardo D."/>
            <person name="Down T."/>
            <person name="Engstrom P."/>
            <person name="Fagiolini M."/>
            <person name="Faulkner G."/>
            <person name="Fletcher C.F."/>
            <person name="Fukushima T."/>
            <person name="Furuno M."/>
            <person name="Futaki S."/>
            <person name="Gariboldi M."/>
            <person name="Georgii-Hemming P."/>
            <person name="Gingeras T.R."/>
            <person name="Gojobori T."/>
            <person name="Green R.E."/>
            <person name="Gustincich S."/>
            <person name="Harbers M."/>
            <person name="Hayashi Y."/>
            <person name="Hensch T.K."/>
            <person name="Hirokawa N."/>
            <person name="Hill D."/>
            <person name="Huminiecki L."/>
            <person name="Iacono M."/>
            <person name="Ikeo K."/>
            <person name="Iwama A."/>
            <person name="Ishikawa T."/>
            <person name="Jakt M."/>
            <person name="Kanapin A."/>
            <person name="Katoh M."/>
            <person name="Kawasawa Y."/>
            <person name="Kelso J."/>
            <person name="Kitamura H."/>
            <person name="Kitano H."/>
            <person name="Kollias G."/>
            <person name="Krishnan S.P."/>
            <person name="Kruger A."/>
            <person name="Kummerfeld S.K."/>
            <person name="Kurochkin I.V."/>
            <person name="Lareau L.F."/>
            <person name="Lazarevic D."/>
            <person name="Lipovich L."/>
            <person name="Liu J."/>
            <person name="Liuni S."/>
            <person name="McWilliam S."/>
            <person name="Madan Babu M."/>
            <person name="Madera M."/>
            <person name="Marchionni L."/>
            <person name="Matsuda H."/>
            <person name="Matsuzawa S."/>
            <person name="Miki H."/>
            <person name="Mignone F."/>
            <person name="Miyake S."/>
            <person name="Morris K."/>
            <person name="Mottagui-Tabar S."/>
            <person name="Mulder N."/>
            <person name="Nakano N."/>
            <person name="Nakauchi H."/>
            <person name="Ng P."/>
            <person name="Nilsson R."/>
            <person name="Nishiguchi S."/>
            <person name="Nishikawa S."/>
            <person name="Nori F."/>
            <person name="Ohara O."/>
            <person name="Okazaki Y."/>
            <person name="Orlando V."/>
            <person name="Pang K.C."/>
            <person name="Pavan W.J."/>
            <person name="Pavesi G."/>
            <person name="Pesole G."/>
            <person name="Petrovsky N."/>
            <person name="Piazza S."/>
            <person name="Reed J."/>
            <person name="Reid J.F."/>
            <person name="Ring B.Z."/>
            <person name="Ringwald M."/>
            <person name="Rost B."/>
            <person name="Ruan Y."/>
            <person name="Salzberg S.L."/>
            <person name="Sandelin A."/>
            <person name="Schneider C."/>
            <person name="Schoenbach C."/>
            <person name="Sekiguchi K."/>
            <person name="Semple C.A."/>
            <person name="Seno S."/>
            <person name="Sessa L."/>
            <person name="Sheng Y."/>
            <person name="Shibata Y."/>
            <person name="Shimada H."/>
            <person name="Shimada K."/>
            <person name="Silva D."/>
            <person name="Sinclair B."/>
            <person name="Sperling S."/>
            <person name="Stupka E."/>
            <person name="Sugiura K."/>
            <person name="Sultana R."/>
            <person name="Takenaka Y."/>
            <person name="Taki K."/>
            <person name="Tammoja K."/>
            <person name="Tan S.L."/>
            <person name="Tang S."/>
            <person name="Taylor M.S."/>
            <person name="Tegner J."/>
            <person name="Teichmann S.A."/>
            <person name="Ueda H.R."/>
            <person name="van Nimwegen E."/>
            <person name="Verardo R."/>
            <person name="Wei C.L."/>
            <person name="Yagi K."/>
            <person name="Yamanishi H."/>
            <person name="Zabarovsky E."/>
            <person name="Zhu S."/>
            <person name="Zimmer A."/>
            <person name="Hide W."/>
            <person name="Bult C."/>
            <person name="Grimmond S.M."/>
            <person name="Teasdale R.D."/>
            <person name="Liu E.T."/>
            <person name="Brusic V."/>
            <person name="Quackenbush J."/>
            <person name="Wahlestedt C."/>
            <person name="Mattick J.S."/>
            <person name="Hume D.A."/>
            <person name="Kai C."/>
            <person name="Sasaki D."/>
            <person name="Tomaru Y."/>
            <person name="Fukuda S."/>
            <person name="Kanamori-Katayama M."/>
            <person name="Suzuki M."/>
            <person name="Aoki J."/>
            <person name="Arakawa T."/>
            <person name="Iida J."/>
            <person name="Imamura K."/>
            <person name="Itoh M."/>
            <person name="Kato T."/>
            <person name="Kawaji H."/>
            <person name="Kawagashira N."/>
            <person name="Kawashima T."/>
            <person name="Kojima M."/>
            <person name="Kondo S."/>
            <person name="Konno H."/>
            <person name="Nakano K."/>
            <person name="Ninomiya N."/>
            <person name="Nishio T."/>
            <person name="Okada M."/>
            <person name="Plessy C."/>
            <person name="Shibata K."/>
            <person name="Shiraki T."/>
            <person name="Suzuki S."/>
            <person name="Tagami M."/>
            <person name="Waki K."/>
            <person name="Watahiki A."/>
            <person name="Okamura-Oho Y."/>
            <person name="Suzuki H."/>
            <person name="Kawai J."/>
            <person name="Hayashizaki Y."/>
        </authorList>
    </citation>
    <scope>NUCLEOTIDE SEQUENCE [LARGE SCALE MRNA]</scope>
    <source>
        <strain>C57BL/6J</strain>
        <tissue>Hypothalamus</tissue>
        <tissue>Pancreas</tissue>
        <tissue>Retina</tissue>
        <tissue>Thymus</tissue>
    </source>
</reference>
<reference key="2">
    <citation type="journal article" date="2010" name="Cell">
        <title>A tissue-specific atlas of mouse protein phosphorylation and expression.</title>
        <authorList>
            <person name="Huttlin E.L."/>
            <person name="Jedrychowski M.P."/>
            <person name="Elias J.E."/>
            <person name="Goswami T."/>
            <person name="Rad R."/>
            <person name="Beausoleil S.A."/>
            <person name="Villen J."/>
            <person name="Haas W."/>
            <person name="Sowa M.E."/>
            <person name="Gygi S.P."/>
        </authorList>
    </citation>
    <scope>PHOSPHORYLATION [LARGE SCALE ANALYSIS] AT SER-79</scope>
    <scope>IDENTIFICATION BY MASS SPECTROMETRY [LARGE SCALE ANALYSIS]</scope>
    <source>
        <tissue>Brain</tissue>
        <tissue>Brown adipose tissue</tissue>
    </source>
</reference>
<reference key="3">
    <citation type="journal article" date="2013" name="Mol. Biol. Cell">
        <title>Fis1, Mff, MiD49, and MiD51 mediate Drp1 recruitment in mitochondrial fission.</title>
        <authorList>
            <person name="Loson O.C."/>
            <person name="Song Z."/>
            <person name="Chen H."/>
            <person name="Chan D.C."/>
        </authorList>
    </citation>
    <scope>FUNCTION</scope>
</reference>
<reference key="4">
    <citation type="journal article" date="2014" name="Structure">
        <title>The mitochondrial fission receptor Mid51 requires ADP as a cofactor.</title>
        <authorList>
            <person name="Loson O.C."/>
            <person name="Liu R."/>
            <person name="Rome M.E."/>
            <person name="Meng S."/>
            <person name="Kaiser J.T."/>
            <person name="Shan S.O."/>
            <person name="Chan D.C."/>
        </authorList>
    </citation>
    <scope>X-RAY CRYSTALLOGRAPHY (2.00 ANGSTROMS) OF 134-463 IN COMPLEX WITH ADP</scope>
    <scope>NUCLEOTIDE-BINDING</scope>
    <scope>FUNCTION</scope>
    <scope>PARTIAL PROTEIN SEQUENCE</scope>
    <scope>INTERACTION WITH DNM1L</scope>
    <scope>SUBCELLULAR LOCATION</scope>
    <scope>MUTAGENESIS OF SER-189; HIS-201 AND LYS-368</scope>
    <scope>SUBUNIT</scope>
    <scope>IDENTIFICATION BY MASS SPECTROMETRY</scope>
</reference>
<name>MID51_MOUSE</name>
<sequence length="463" mass="51184">MAGAGERKGKKDDNGIGTAIDFVLSNARLVLGVGGAAMLGIATLAVKRMYDRAISAPTSPTRLSHSGKRSWEEPNWMGSPRLLNKDMKAGLSRSLQTLPTDSSAFDTDTFCPPRPKPLARRGQVDLKKSRLRMSLQEKLLSYYRNRAAIPAGEQARAKQAAVDICAELRSFLRAKLPDMPLRDMYLSGSLYDDLQVVTADHIQLIVPLVLEQNLWSCIPGEDTIMNVPGFFLVRRENPEYFPRGSSYWDRCVVGGYLSPKTVADTFEKVVAGSINWPAIGSLLDYVIRPAPPPEALTLEVQYEKDKHLVIDFLPSVTLGDTVLVARPHRLAQYDNLWRLSLRPAETARLRALDQADSGCRSLCLKILKAICKSTPALGHLTASQLTNVILHLAQEEADWSPDMLADRFLQALRGLISYLEAGVLPSALNPKVNLFAELTPQEIDELGYTLYCSLSEPEVLLQT</sequence>
<gene>
    <name type="primary">Mief1</name>
    <name type="synonym">Mid51</name>
    <name type="synonym">Smcr7l</name>
</gene>